<name>RIBA_SHELP</name>
<comment type="function">
    <text evidence="1">Catalyzes the conversion of GTP to 2,5-diamino-6-ribosylamino-4(3H)-pyrimidinone 5'-phosphate (DARP), formate and pyrophosphate.</text>
</comment>
<comment type="catalytic activity">
    <reaction evidence="1">
        <text>GTP + 4 H2O = 2,5-diamino-6-hydroxy-4-(5-phosphoribosylamino)-pyrimidine + formate + 2 phosphate + 3 H(+)</text>
        <dbReference type="Rhea" id="RHEA:23704"/>
        <dbReference type="ChEBI" id="CHEBI:15377"/>
        <dbReference type="ChEBI" id="CHEBI:15378"/>
        <dbReference type="ChEBI" id="CHEBI:15740"/>
        <dbReference type="ChEBI" id="CHEBI:37565"/>
        <dbReference type="ChEBI" id="CHEBI:43474"/>
        <dbReference type="ChEBI" id="CHEBI:58614"/>
        <dbReference type="EC" id="3.5.4.25"/>
    </reaction>
</comment>
<comment type="cofactor">
    <cofactor evidence="1">
        <name>Zn(2+)</name>
        <dbReference type="ChEBI" id="CHEBI:29105"/>
    </cofactor>
    <text evidence="1">Binds 1 zinc ion per subunit.</text>
</comment>
<comment type="pathway">
    <text evidence="1">Cofactor biosynthesis; riboflavin biosynthesis; 5-amino-6-(D-ribitylamino)uracil from GTP: step 1/4.</text>
</comment>
<comment type="similarity">
    <text evidence="1">Belongs to the GTP cyclohydrolase II family.</text>
</comment>
<accession>A3QFR4</accession>
<sequence>MSIKYVATSKLPTPWGVFAMHGFEDTETGKEHVALTFGELDASQPILGRIHSECLTGDALFSLRCDCGFQLQTAMQNIAEAGQGFILYLRQEGRGIGLLNKIRAYELQDQGANTVEANERLGFAADMRKYDMIKPMLEKIGVQQVKLMTNNPRKVKAMKELGIAVIERVPLQVGKNRYNEAYLKTKSTELGHMMSEYHFTEEHQD</sequence>
<keyword id="KW-0342">GTP-binding</keyword>
<keyword id="KW-0378">Hydrolase</keyword>
<keyword id="KW-0479">Metal-binding</keyword>
<keyword id="KW-0547">Nucleotide-binding</keyword>
<keyword id="KW-1185">Reference proteome</keyword>
<keyword id="KW-0686">Riboflavin biosynthesis</keyword>
<keyword id="KW-0862">Zinc</keyword>
<dbReference type="EC" id="3.5.4.25" evidence="1"/>
<dbReference type="EMBL" id="CP000606">
    <property type="protein sequence ID" value="ABO24312.1"/>
    <property type="molecule type" value="Genomic_DNA"/>
</dbReference>
<dbReference type="RefSeq" id="WP_011866243.1">
    <property type="nucleotide sequence ID" value="NC_009092.1"/>
</dbReference>
<dbReference type="SMR" id="A3QFR4"/>
<dbReference type="STRING" id="323850.Shew_2446"/>
<dbReference type="KEGG" id="slo:Shew_2446"/>
<dbReference type="eggNOG" id="COG0807">
    <property type="taxonomic scope" value="Bacteria"/>
</dbReference>
<dbReference type="HOGENOM" id="CLU_020273_2_1_6"/>
<dbReference type="OrthoDB" id="9793111at2"/>
<dbReference type="UniPathway" id="UPA00275">
    <property type="reaction ID" value="UER00400"/>
</dbReference>
<dbReference type="Proteomes" id="UP000001558">
    <property type="component" value="Chromosome"/>
</dbReference>
<dbReference type="GO" id="GO:0005829">
    <property type="term" value="C:cytosol"/>
    <property type="evidence" value="ECO:0007669"/>
    <property type="project" value="TreeGrafter"/>
</dbReference>
<dbReference type="GO" id="GO:0005525">
    <property type="term" value="F:GTP binding"/>
    <property type="evidence" value="ECO:0007669"/>
    <property type="project" value="UniProtKB-KW"/>
</dbReference>
<dbReference type="GO" id="GO:0003935">
    <property type="term" value="F:GTP cyclohydrolase II activity"/>
    <property type="evidence" value="ECO:0007669"/>
    <property type="project" value="UniProtKB-UniRule"/>
</dbReference>
<dbReference type="GO" id="GO:0008270">
    <property type="term" value="F:zinc ion binding"/>
    <property type="evidence" value="ECO:0007669"/>
    <property type="project" value="UniProtKB-UniRule"/>
</dbReference>
<dbReference type="GO" id="GO:0009231">
    <property type="term" value="P:riboflavin biosynthetic process"/>
    <property type="evidence" value="ECO:0007669"/>
    <property type="project" value="UniProtKB-UniRule"/>
</dbReference>
<dbReference type="CDD" id="cd00641">
    <property type="entry name" value="GTP_cyclohydro2"/>
    <property type="match status" value="1"/>
</dbReference>
<dbReference type="FunFam" id="3.40.50.10990:FF:000002">
    <property type="entry name" value="GTP cyclohydrolase-2"/>
    <property type="match status" value="1"/>
</dbReference>
<dbReference type="Gene3D" id="3.40.50.10990">
    <property type="entry name" value="GTP cyclohydrolase II"/>
    <property type="match status" value="1"/>
</dbReference>
<dbReference type="HAMAP" id="MF_00179">
    <property type="entry name" value="RibA"/>
    <property type="match status" value="1"/>
</dbReference>
<dbReference type="InterPro" id="IPR032677">
    <property type="entry name" value="GTP_cyclohydro_II"/>
</dbReference>
<dbReference type="InterPro" id="IPR000926">
    <property type="entry name" value="RibA"/>
</dbReference>
<dbReference type="InterPro" id="IPR036144">
    <property type="entry name" value="RibA-like_sf"/>
</dbReference>
<dbReference type="NCBIfam" id="NF001591">
    <property type="entry name" value="PRK00393.1"/>
    <property type="match status" value="1"/>
</dbReference>
<dbReference type="NCBIfam" id="TIGR00505">
    <property type="entry name" value="ribA"/>
    <property type="match status" value="1"/>
</dbReference>
<dbReference type="PANTHER" id="PTHR21327:SF18">
    <property type="entry name" value="3,4-DIHYDROXY-2-BUTANONE 4-PHOSPHATE SYNTHASE"/>
    <property type="match status" value="1"/>
</dbReference>
<dbReference type="PANTHER" id="PTHR21327">
    <property type="entry name" value="GTP CYCLOHYDROLASE II-RELATED"/>
    <property type="match status" value="1"/>
</dbReference>
<dbReference type="Pfam" id="PF00925">
    <property type="entry name" value="GTP_cyclohydro2"/>
    <property type="match status" value="1"/>
</dbReference>
<dbReference type="SUPFAM" id="SSF142695">
    <property type="entry name" value="RibA-like"/>
    <property type="match status" value="1"/>
</dbReference>
<reference key="1">
    <citation type="submission" date="2007-03" db="EMBL/GenBank/DDBJ databases">
        <title>Complete sequence of Shewanella loihica PV-4.</title>
        <authorList>
            <consortium name="US DOE Joint Genome Institute"/>
            <person name="Copeland A."/>
            <person name="Lucas S."/>
            <person name="Lapidus A."/>
            <person name="Barry K."/>
            <person name="Detter J.C."/>
            <person name="Glavina del Rio T."/>
            <person name="Hammon N."/>
            <person name="Israni S."/>
            <person name="Dalin E."/>
            <person name="Tice H."/>
            <person name="Pitluck S."/>
            <person name="Chain P."/>
            <person name="Malfatti S."/>
            <person name="Shin M."/>
            <person name="Vergez L."/>
            <person name="Schmutz J."/>
            <person name="Larimer F."/>
            <person name="Land M."/>
            <person name="Hauser L."/>
            <person name="Kyrpides N."/>
            <person name="Mikhailova N."/>
            <person name="Romine M.F."/>
            <person name="Serres G."/>
            <person name="Fredrickson J."/>
            <person name="Tiedje J."/>
            <person name="Richardson P."/>
        </authorList>
    </citation>
    <scope>NUCLEOTIDE SEQUENCE [LARGE SCALE GENOMIC DNA]</scope>
    <source>
        <strain>ATCC BAA-1088 / PV-4</strain>
    </source>
</reference>
<gene>
    <name evidence="1" type="primary">ribA</name>
    <name type="ordered locus">Shew_2446</name>
</gene>
<organism>
    <name type="scientific">Shewanella loihica (strain ATCC BAA-1088 / PV-4)</name>
    <dbReference type="NCBI Taxonomy" id="323850"/>
    <lineage>
        <taxon>Bacteria</taxon>
        <taxon>Pseudomonadati</taxon>
        <taxon>Pseudomonadota</taxon>
        <taxon>Gammaproteobacteria</taxon>
        <taxon>Alteromonadales</taxon>
        <taxon>Shewanellaceae</taxon>
        <taxon>Shewanella</taxon>
    </lineage>
</organism>
<evidence type="ECO:0000255" key="1">
    <source>
        <dbReference type="HAMAP-Rule" id="MF_00179"/>
    </source>
</evidence>
<protein>
    <recommendedName>
        <fullName evidence="1">GTP cyclohydrolase-2</fullName>
        <ecNumber evidence="1">3.5.4.25</ecNumber>
    </recommendedName>
    <alternativeName>
        <fullName evidence="1">GTP cyclohydrolase II</fullName>
    </alternativeName>
</protein>
<feature type="chain" id="PRO_1000040583" description="GTP cyclohydrolase-2">
    <location>
        <begin position="1"/>
        <end position="205"/>
    </location>
</feature>
<feature type="active site" description="Proton acceptor" evidence="1">
    <location>
        <position position="126"/>
    </location>
</feature>
<feature type="active site" description="Nucleophile" evidence="1">
    <location>
        <position position="128"/>
    </location>
</feature>
<feature type="binding site" evidence="1">
    <location>
        <begin position="49"/>
        <end position="53"/>
    </location>
    <ligand>
        <name>GTP</name>
        <dbReference type="ChEBI" id="CHEBI:37565"/>
    </ligand>
</feature>
<feature type="binding site" evidence="1">
    <location>
        <position position="54"/>
    </location>
    <ligand>
        <name>Zn(2+)</name>
        <dbReference type="ChEBI" id="CHEBI:29105"/>
        <note>catalytic</note>
    </ligand>
</feature>
<feature type="binding site" evidence="1">
    <location>
        <position position="65"/>
    </location>
    <ligand>
        <name>Zn(2+)</name>
        <dbReference type="ChEBI" id="CHEBI:29105"/>
        <note>catalytic</note>
    </ligand>
</feature>
<feature type="binding site" evidence="1">
    <location>
        <position position="67"/>
    </location>
    <ligand>
        <name>Zn(2+)</name>
        <dbReference type="ChEBI" id="CHEBI:29105"/>
        <note>catalytic</note>
    </ligand>
</feature>
<feature type="binding site" evidence="1">
    <location>
        <position position="70"/>
    </location>
    <ligand>
        <name>GTP</name>
        <dbReference type="ChEBI" id="CHEBI:37565"/>
    </ligand>
</feature>
<feature type="binding site" evidence="1">
    <location>
        <begin position="92"/>
        <end position="94"/>
    </location>
    <ligand>
        <name>GTP</name>
        <dbReference type="ChEBI" id="CHEBI:37565"/>
    </ligand>
</feature>
<feature type="binding site" evidence="1">
    <location>
        <position position="114"/>
    </location>
    <ligand>
        <name>GTP</name>
        <dbReference type="ChEBI" id="CHEBI:37565"/>
    </ligand>
</feature>
<feature type="binding site" evidence="1">
    <location>
        <position position="149"/>
    </location>
    <ligand>
        <name>GTP</name>
        <dbReference type="ChEBI" id="CHEBI:37565"/>
    </ligand>
</feature>
<feature type="binding site" evidence="1">
    <location>
        <position position="154"/>
    </location>
    <ligand>
        <name>GTP</name>
        <dbReference type="ChEBI" id="CHEBI:37565"/>
    </ligand>
</feature>
<proteinExistence type="inferred from homology"/>